<evidence type="ECO:0000255" key="1">
    <source>
        <dbReference type="HAMAP-Rule" id="MF_00353"/>
    </source>
</evidence>
<gene>
    <name evidence="1" type="primary">chlB</name>
</gene>
<keyword id="KW-0004">4Fe-4S</keyword>
<keyword id="KW-0067">ATP-binding</keyword>
<keyword id="KW-0149">Chlorophyll biosynthesis</keyword>
<keyword id="KW-0150">Chloroplast</keyword>
<keyword id="KW-0408">Iron</keyword>
<keyword id="KW-0411">Iron-sulfur</keyword>
<keyword id="KW-0479">Metal-binding</keyword>
<keyword id="KW-0547">Nucleotide-binding</keyword>
<keyword id="KW-0560">Oxidoreductase</keyword>
<keyword id="KW-0602">Photosynthesis</keyword>
<keyword id="KW-0934">Plastid</keyword>
<reference key="1">
    <citation type="journal article" date="1997" name="Proc. Natl. Acad. Sci. U.S.A.">
        <title>Complete nucleotide sequence of the chloroplast genome from the green alga Chlorella vulgaris: the existence of genes possibly involved in chloroplast division.</title>
        <authorList>
            <person name="Wakasugi T."/>
            <person name="Nagai T."/>
            <person name="Kapoor M."/>
            <person name="Sugita M."/>
            <person name="Ito M."/>
            <person name="Ito S."/>
            <person name="Tsudzuki J."/>
            <person name="Nakashima K."/>
            <person name="Tsudzuki T."/>
            <person name="Suzuki Y."/>
            <person name="Hamada A."/>
            <person name="Ohta T."/>
            <person name="Inamura A."/>
            <person name="Yoshinaga K."/>
            <person name="Sugiura M."/>
        </authorList>
    </citation>
    <scope>NUCLEOTIDE SEQUENCE [LARGE SCALE GENOMIC DNA]</scope>
    <source>
        <strain>IAM C-27 / Tamiya</strain>
    </source>
</reference>
<protein>
    <recommendedName>
        <fullName evidence="1">Light-independent protochlorophyllide reductase subunit B</fullName>
        <shortName evidence="1">DPOR subunit B</shortName>
        <shortName evidence="1">LI-POR subunit B</shortName>
        <ecNumber evidence="1">1.3.7.7</ecNumber>
    </recommendedName>
</protein>
<proteinExistence type="inferred from homology"/>
<comment type="function">
    <text evidence="1">Component of the dark-operative protochlorophyllide reductase (DPOR) that uses Mg-ATP and reduced ferredoxin to reduce ring D of protochlorophyllide (Pchlide) to form chlorophyllide a (Chlide). This reaction is light-independent. The NB-protein (ChlN-ChlB) is the catalytic component of the complex.</text>
</comment>
<comment type="catalytic activity">
    <reaction evidence="1">
        <text>chlorophyllide a + oxidized 2[4Fe-4S]-[ferredoxin] + 2 ADP + 2 phosphate = protochlorophyllide a + reduced 2[4Fe-4S]-[ferredoxin] + 2 ATP + 2 H2O</text>
        <dbReference type="Rhea" id="RHEA:28202"/>
        <dbReference type="Rhea" id="RHEA-COMP:10002"/>
        <dbReference type="Rhea" id="RHEA-COMP:10004"/>
        <dbReference type="ChEBI" id="CHEBI:15377"/>
        <dbReference type="ChEBI" id="CHEBI:30616"/>
        <dbReference type="ChEBI" id="CHEBI:33722"/>
        <dbReference type="ChEBI" id="CHEBI:33723"/>
        <dbReference type="ChEBI" id="CHEBI:43474"/>
        <dbReference type="ChEBI" id="CHEBI:83348"/>
        <dbReference type="ChEBI" id="CHEBI:83350"/>
        <dbReference type="ChEBI" id="CHEBI:456216"/>
        <dbReference type="EC" id="1.3.7.7"/>
    </reaction>
</comment>
<comment type="cofactor">
    <cofactor evidence="1">
        <name>[4Fe-4S] cluster</name>
        <dbReference type="ChEBI" id="CHEBI:49883"/>
    </cofactor>
    <text evidence="1">Binds 1 [4Fe-4S] cluster per heterodimer. The cluster is bound at the heterodimer interface by residues from both subunits.</text>
</comment>
<comment type="pathway">
    <text evidence="1">Porphyrin-containing compound metabolism; chlorophyll biosynthesis (light-independent).</text>
</comment>
<comment type="subunit">
    <text evidence="1">Protochlorophyllide reductase is composed of three subunits; ChlL, ChlN and ChlB. Forms a heterotetramer of two ChlB and two ChlN subunits.</text>
</comment>
<comment type="subcellular location">
    <subcellularLocation>
        <location>Plastid</location>
        <location>Chloroplast</location>
    </subcellularLocation>
</comment>
<comment type="similarity">
    <text evidence="1">Belongs to the ChlB/BchB/BchZ family.</text>
</comment>
<feature type="chain" id="PRO_0000219818" description="Light-independent protochlorophyllide reductase subunit B">
    <location>
        <begin position="1"/>
        <end position="510"/>
    </location>
</feature>
<feature type="active site" description="Proton donor" evidence="1">
    <location>
        <position position="296"/>
    </location>
</feature>
<feature type="binding site" evidence="1">
    <location>
        <position position="36"/>
    </location>
    <ligand>
        <name>[4Fe-4S] cluster</name>
        <dbReference type="ChEBI" id="CHEBI:49883"/>
        <note>ligand shared with heterodimeric partner</note>
    </ligand>
</feature>
<feature type="binding site" evidence="1">
    <location>
        <begin position="431"/>
        <end position="432"/>
    </location>
    <ligand>
        <name>substrate</name>
    </ligand>
</feature>
<name>CHLB_CHLVU</name>
<accession>P56302</accession>
<geneLocation type="chloroplast"/>
<organism>
    <name type="scientific">Chlorella vulgaris</name>
    <name type="common">Green alga</name>
    <dbReference type="NCBI Taxonomy" id="3077"/>
    <lineage>
        <taxon>Eukaryota</taxon>
        <taxon>Viridiplantae</taxon>
        <taxon>Chlorophyta</taxon>
        <taxon>core chlorophytes</taxon>
        <taxon>Trebouxiophyceae</taxon>
        <taxon>Chlorellales</taxon>
        <taxon>Chlorellaceae</taxon>
        <taxon>Chlorella clade</taxon>
        <taxon>Chlorella</taxon>
    </lineage>
</organism>
<dbReference type="EC" id="1.3.7.7" evidence="1"/>
<dbReference type="EMBL" id="AB001684">
    <property type="protein sequence ID" value="BAA57916.1"/>
    <property type="molecule type" value="Genomic_DNA"/>
</dbReference>
<dbReference type="PIR" id="T07268">
    <property type="entry name" value="T07268"/>
</dbReference>
<dbReference type="RefSeq" id="NP_045840.1">
    <property type="nucleotide sequence ID" value="NC_001865.1"/>
</dbReference>
<dbReference type="SMR" id="P56302"/>
<dbReference type="GeneID" id="809139"/>
<dbReference type="OrthoDB" id="645at2759"/>
<dbReference type="UniPathway" id="UPA00670"/>
<dbReference type="GO" id="GO:0009507">
    <property type="term" value="C:chloroplast"/>
    <property type="evidence" value="ECO:0007669"/>
    <property type="project" value="UniProtKB-SubCell"/>
</dbReference>
<dbReference type="GO" id="GO:0051539">
    <property type="term" value="F:4 iron, 4 sulfur cluster binding"/>
    <property type="evidence" value="ECO:0007669"/>
    <property type="project" value="UniProtKB-UniRule"/>
</dbReference>
<dbReference type="GO" id="GO:0005524">
    <property type="term" value="F:ATP binding"/>
    <property type="evidence" value="ECO:0007669"/>
    <property type="project" value="UniProtKB-UniRule"/>
</dbReference>
<dbReference type="GO" id="GO:0046872">
    <property type="term" value="F:metal ion binding"/>
    <property type="evidence" value="ECO:0007669"/>
    <property type="project" value="UniProtKB-KW"/>
</dbReference>
<dbReference type="GO" id="GO:0016730">
    <property type="term" value="F:oxidoreductase activity, acting on iron-sulfur proteins as donors"/>
    <property type="evidence" value="ECO:0007669"/>
    <property type="project" value="InterPro"/>
</dbReference>
<dbReference type="GO" id="GO:0016636">
    <property type="term" value="F:oxidoreductase activity, acting on the CH-CH group of donors, iron-sulfur protein as acceptor"/>
    <property type="evidence" value="ECO:0007669"/>
    <property type="project" value="UniProtKB-UniRule"/>
</dbReference>
<dbReference type="GO" id="GO:0036068">
    <property type="term" value="P:light-independent chlorophyll biosynthetic process"/>
    <property type="evidence" value="ECO:0007669"/>
    <property type="project" value="UniProtKB-UniRule"/>
</dbReference>
<dbReference type="GO" id="GO:0019685">
    <property type="term" value="P:photosynthesis, dark reaction"/>
    <property type="evidence" value="ECO:0007669"/>
    <property type="project" value="InterPro"/>
</dbReference>
<dbReference type="CDD" id="cd01981">
    <property type="entry name" value="Pchlide_reductase_B"/>
    <property type="match status" value="1"/>
</dbReference>
<dbReference type="Gene3D" id="1.20.89.20">
    <property type="match status" value="1"/>
</dbReference>
<dbReference type="Gene3D" id="3.40.50.1980">
    <property type="entry name" value="Nitrogenase molybdenum iron protein domain"/>
    <property type="match status" value="3"/>
</dbReference>
<dbReference type="Gene3D" id="1.10.8.550">
    <property type="entry name" value="Proto-chlorophyllide reductase 57 kD subunit B"/>
    <property type="match status" value="1"/>
</dbReference>
<dbReference type="HAMAP" id="MF_00353">
    <property type="entry name" value="ChlB_BchB"/>
    <property type="match status" value="1"/>
</dbReference>
<dbReference type="InterPro" id="IPR050152">
    <property type="entry name" value="ChlB/BchB/BchZ"/>
</dbReference>
<dbReference type="InterPro" id="IPR013580">
    <property type="entry name" value="LI-POR_suB-like_C"/>
</dbReference>
<dbReference type="InterPro" id="IPR000510">
    <property type="entry name" value="Nase/OxRdtase_comp1"/>
</dbReference>
<dbReference type="InterPro" id="IPR042298">
    <property type="entry name" value="P-CP_red_C"/>
</dbReference>
<dbReference type="InterPro" id="IPR005969">
    <property type="entry name" value="Protochl_reductB"/>
</dbReference>
<dbReference type="InterPro" id="IPR016209">
    <property type="entry name" value="Protochlorophyllide_Rdtase"/>
</dbReference>
<dbReference type="NCBIfam" id="TIGR01278">
    <property type="entry name" value="DPOR_BchB"/>
    <property type="match status" value="1"/>
</dbReference>
<dbReference type="PANTHER" id="PTHR33712">
    <property type="entry name" value="LIGHT-INDEPENDENT PROTOCHLOROPHYLLIDE REDUCTASE SUBUNIT B"/>
    <property type="match status" value="1"/>
</dbReference>
<dbReference type="PANTHER" id="PTHR33712:SF7">
    <property type="entry name" value="LIGHT-INDEPENDENT PROTOCHLOROPHYLLIDE REDUCTASE SUBUNIT B"/>
    <property type="match status" value="1"/>
</dbReference>
<dbReference type="Pfam" id="PF00148">
    <property type="entry name" value="Oxidored_nitro"/>
    <property type="match status" value="1"/>
</dbReference>
<dbReference type="Pfam" id="PF08369">
    <property type="entry name" value="PCP_red"/>
    <property type="match status" value="1"/>
</dbReference>
<dbReference type="PIRSF" id="PIRSF000163">
    <property type="entry name" value="PCP_ChlB"/>
    <property type="match status" value="1"/>
</dbReference>
<dbReference type="SUPFAM" id="SSF53807">
    <property type="entry name" value="Helical backbone' metal receptor"/>
    <property type="match status" value="1"/>
</dbReference>
<sequence length="510" mass="57539">MKLAYWMYAGPAHIGTLRVASSFKNVHAIMHAPLGDDYFNVMRSMLERERDFTPVTASIVDRHVLARGSQEKVIENITRKDKEENPDLIILTPTCTSSILQEDLQNFVNRAGLDSKSDVILADVNHYRVNELQAADRTLEQIIRFYLEKARSQSNEPLRKTEKPSANILGIFTLGFHNQHDCRELKRLLTDLGIVINQILPEGGSVTNINELPKAWFNLIPYREVGLMAANYLKNEYDMPYVAVTPMGLLDTENCIREIVDIVKSSDTSYNFDFETYIDTQTRFISQAAWFSRSIDCQNLTGKKAVVFGDATHAASITKILAREMGIRVSCSGTYCKHDADWFREQVDGFCDEVLITDDHTQVADMIARIEPAAIFGTQMERHIGKRLDIPCGVISAPVHIQNFPLGFRPFLGYEGTNQISDLVYNSFTLGMEDHLLEIFGGHDTKEVITKSLSTDSDLAWAPEALTELQRIPGFVRGKIKRNTEKFAREKNCNLITLEIMFAAKEAVGA</sequence>